<proteinExistence type="inferred from homology"/>
<accession>Q3BRP9</accession>
<comment type="function">
    <text evidence="1">Involved in mRNA degradation. Catalyzes the phosphorolysis of single-stranded polyribonucleotides processively in the 3'- to 5'-direction.</text>
</comment>
<comment type="catalytic activity">
    <reaction evidence="1">
        <text>RNA(n+1) + phosphate = RNA(n) + a ribonucleoside 5'-diphosphate</text>
        <dbReference type="Rhea" id="RHEA:22096"/>
        <dbReference type="Rhea" id="RHEA-COMP:14527"/>
        <dbReference type="Rhea" id="RHEA-COMP:17342"/>
        <dbReference type="ChEBI" id="CHEBI:43474"/>
        <dbReference type="ChEBI" id="CHEBI:57930"/>
        <dbReference type="ChEBI" id="CHEBI:140395"/>
        <dbReference type="EC" id="2.7.7.8"/>
    </reaction>
</comment>
<comment type="cofactor">
    <cofactor evidence="1">
        <name>Mg(2+)</name>
        <dbReference type="ChEBI" id="CHEBI:18420"/>
    </cofactor>
</comment>
<comment type="subunit">
    <text evidence="1">Component of the RNA degradosome, which is a multiprotein complex involved in RNA processing and mRNA degradation.</text>
</comment>
<comment type="subcellular location">
    <subcellularLocation>
        <location evidence="1">Cytoplasm</location>
    </subcellularLocation>
</comment>
<comment type="similarity">
    <text evidence="1">Belongs to the polyribonucleotide nucleotidyltransferase family.</text>
</comment>
<dbReference type="EC" id="2.7.7.8" evidence="1"/>
<dbReference type="EMBL" id="AM039952">
    <property type="protein sequence ID" value="CAJ24512.1"/>
    <property type="molecule type" value="Genomic_DNA"/>
</dbReference>
<dbReference type="RefSeq" id="WP_008570980.1">
    <property type="nucleotide sequence ID" value="NZ_CP017190.1"/>
</dbReference>
<dbReference type="SMR" id="Q3BRP9"/>
<dbReference type="STRING" id="456327.BJD11_08710"/>
<dbReference type="GeneID" id="63991849"/>
<dbReference type="KEGG" id="xcv:XCV2833"/>
<dbReference type="eggNOG" id="COG1185">
    <property type="taxonomic scope" value="Bacteria"/>
</dbReference>
<dbReference type="HOGENOM" id="CLU_004217_2_2_6"/>
<dbReference type="Proteomes" id="UP000007069">
    <property type="component" value="Chromosome"/>
</dbReference>
<dbReference type="GO" id="GO:0005829">
    <property type="term" value="C:cytosol"/>
    <property type="evidence" value="ECO:0007669"/>
    <property type="project" value="TreeGrafter"/>
</dbReference>
<dbReference type="GO" id="GO:0000175">
    <property type="term" value="F:3'-5'-RNA exonuclease activity"/>
    <property type="evidence" value="ECO:0007669"/>
    <property type="project" value="TreeGrafter"/>
</dbReference>
<dbReference type="GO" id="GO:0000287">
    <property type="term" value="F:magnesium ion binding"/>
    <property type="evidence" value="ECO:0007669"/>
    <property type="project" value="UniProtKB-UniRule"/>
</dbReference>
<dbReference type="GO" id="GO:0004654">
    <property type="term" value="F:polyribonucleotide nucleotidyltransferase activity"/>
    <property type="evidence" value="ECO:0007669"/>
    <property type="project" value="UniProtKB-UniRule"/>
</dbReference>
<dbReference type="GO" id="GO:0003723">
    <property type="term" value="F:RNA binding"/>
    <property type="evidence" value="ECO:0007669"/>
    <property type="project" value="UniProtKB-UniRule"/>
</dbReference>
<dbReference type="GO" id="GO:0006402">
    <property type="term" value="P:mRNA catabolic process"/>
    <property type="evidence" value="ECO:0007669"/>
    <property type="project" value="UniProtKB-UniRule"/>
</dbReference>
<dbReference type="GO" id="GO:0006396">
    <property type="term" value="P:RNA processing"/>
    <property type="evidence" value="ECO:0007669"/>
    <property type="project" value="InterPro"/>
</dbReference>
<dbReference type="CDD" id="cd02393">
    <property type="entry name" value="KH-I_PNPase"/>
    <property type="match status" value="1"/>
</dbReference>
<dbReference type="CDD" id="cd11363">
    <property type="entry name" value="RNase_PH_PNPase_1"/>
    <property type="match status" value="1"/>
</dbReference>
<dbReference type="CDD" id="cd11364">
    <property type="entry name" value="RNase_PH_PNPase_2"/>
    <property type="match status" value="1"/>
</dbReference>
<dbReference type="CDD" id="cd04472">
    <property type="entry name" value="S1_PNPase"/>
    <property type="match status" value="1"/>
</dbReference>
<dbReference type="FunFam" id="2.40.50.140:FF:000023">
    <property type="entry name" value="Polyribonucleotide nucleotidyltransferase"/>
    <property type="match status" value="1"/>
</dbReference>
<dbReference type="FunFam" id="3.30.1370.10:FF:000001">
    <property type="entry name" value="Polyribonucleotide nucleotidyltransferase"/>
    <property type="match status" value="1"/>
</dbReference>
<dbReference type="FunFam" id="3.30.230.70:FF:000001">
    <property type="entry name" value="Polyribonucleotide nucleotidyltransferase"/>
    <property type="match status" value="1"/>
</dbReference>
<dbReference type="FunFam" id="3.30.230.70:FF:000002">
    <property type="entry name" value="Polyribonucleotide nucleotidyltransferase"/>
    <property type="match status" value="1"/>
</dbReference>
<dbReference type="Gene3D" id="3.30.230.70">
    <property type="entry name" value="GHMP Kinase, N-terminal domain"/>
    <property type="match status" value="2"/>
</dbReference>
<dbReference type="Gene3D" id="3.30.1370.10">
    <property type="entry name" value="K Homology domain, type 1"/>
    <property type="match status" value="1"/>
</dbReference>
<dbReference type="Gene3D" id="2.40.50.140">
    <property type="entry name" value="Nucleic acid-binding proteins"/>
    <property type="match status" value="1"/>
</dbReference>
<dbReference type="HAMAP" id="MF_01595">
    <property type="entry name" value="PNPase"/>
    <property type="match status" value="1"/>
</dbReference>
<dbReference type="InterPro" id="IPR001247">
    <property type="entry name" value="ExoRNase_PH_dom1"/>
</dbReference>
<dbReference type="InterPro" id="IPR015847">
    <property type="entry name" value="ExoRNase_PH_dom2"/>
</dbReference>
<dbReference type="InterPro" id="IPR036345">
    <property type="entry name" value="ExoRNase_PH_dom2_sf"/>
</dbReference>
<dbReference type="InterPro" id="IPR004087">
    <property type="entry name" value="KH_dom"/>
</dbReference>
<dbReference type="InterPro" id="IPR004088">
    <property type="entry name" value="KH_dom_type_1"/>
</dbReference>
<dbReference type="InterPro" id="IPR036612">
    <property type="entry name" value="KH_dom_type_1_sf"/>
</dbReference>
<dbReference type="InterPro" id="IPR012340">
    <property type="entry name" value="NA-bd_OB-fold"/>
</dbReference>
<dbReference type="InterPro" id="IPR012162">
    <property type="entry name" value="PNPase"/>
</dbReference>
<dbReference type="InterPro" id="IPR027408">
    <property type="entry name" value="PNPase/RNase_PH_dom_sf"/>
</dbReference>
<dbReference type="InterPro" id="IPR015848">
    <property type="entry name" value="PNPase_PH_RNA-bd_bac/org-type"/>
</dbReference>
<dbReference type="InterPro" id="IPR036456">
    <property type="entry name" value="PNPase_PH_RNA-bd_sf"/>
</dbReference>
<dbReference type="InterPro" id="IPR020568">
    <property type="entry name" value="Ribosomal_Su5_D2-typ_SF"/>
</dbReference>
<dbReference type="InterPro" id="IPR003029">
    <property type="entry name" value="S1_domain"/>
</dbReference>
<dbReference type="NCBIfam" id="TIGR03591">
    <property type="entry name" value="polynuc_phos"/>
    <property type="match status" value="1"/>
</dbReference>
<dbReference type="NCBIfam" id="NF008805">
    <property type="entry name" value="PRK11824.1"/>
    <property type="match status" value="1"/>
</dbReference>
<dbReference type="PANTHER" id="PTHR11252">
    <property type="entry name" value="POLYRIBONUCLEOTIDE NUCLEOTIDYLTRANSFERASE"/>
    <property type="match status" value="1"/>
</dbReference>
<dbReference type="PANTHER" id="PTHR11252:SF0">
    <property type="entry name" value="POLYRIBONUCLEOTIDE NUCLEOTIDYLTRANSFERASE 1, MITOCHONDRIAL"/>
    <property type="match status" value="1"/>
</dbReference>
<dbReference type="Pfam" id="PF00013">
    <property type="entry name" value="KH_1"/>
    <property type="match status" value="1"/>
</dbReference>
<dbReference type="Pfam" id="PF03726">
    <property type="entry name" value="PNPase"/>
    <property type="match status" value="1"/>
</dbReference>
<dbReference type="Pfam" id="PF01138">
    <property type="entry name" value="RNase_PH"/>
    <property type="match status" value="2"/>
</dbReference>
<dbReference type="Pfam" id="PF03725">
    <property type="entry name" value="RNase_PH_C"/>
    <property type="match status" value="2"/>
</dbReference>
<dbReference type="Pfam" id="PF00575">
    <property type="entry name" value="S1"/>
    <property type="match status" value="1"/>
</dbReference>
<dbReference type="PIRSF" id="PIRSF005499">
    <property type="entry name" value="PNPase"/>
    <property type="match status" value="1"/>
</dbReference>
<dbReference type="SMART" id="SM00322">
    <property type="entry name" value="KH"/>
    <property type="match status" value="1"/>
</dbReference>
<dbReference type="SMART" id="SM00316">
    <property type="entry name" value="S1"/>
    <property type="match status" value="1"/>
</dbReference>
<dbReference type="SUPFAM" id="SSF54791">
    <property type="entry name" value="Eukaryotic type KH-domain (KH-domain type I)"/>
    <property type="match status" value="1"/>
</dbReference>
<dbReference type="SUPFAM" id="SSF50249">
    <property type="entry name" value="Nucleic acid-binding proteins"/>
    <property type="match status" value="1"/>
</dbReference>
<dbReference type="SUPFAM" id="SSF46915">
    <property type="entry name" value="Polynucleotide phosphorylase/guanosine pentaphosphate synthase (PNPase/GPSI), domain 3"/>
    <property type="match status" value="1"/>
</dbReference>
<dbReference type="SUPFAM" id="SSF55666">
    <property type="entry name" value="Ribonuclease PH domain 2-like"/>
    <property type="match status" value="2"/>
</dbReference>
<dbReference type="SUPFAM" id="SSF54211">
    <property type="entry name" value="Ribosomal protein S5 domain 2-like"/>
    <property type="match status" value="2"/>
</dbReference>
<dbReference type="PROSITE" id="PS50084">
    <property type="entry name" value="KH_TYPE_1"/>
    <property type="match status" value="1"/>
</dbReference>
<dbReference type="PROSITE" id="PS50126">
    <property type="entry name" value="S1"/>
    <property type="match status" value="1"/>
</dbReference>
<feature type="chain" id="PRO_0000329941" description="Polyribonucleotide nucleotidyltransferase">
    <location>
        <begin position="1"/>
        <end position="704"/>
    </location>
</feature>
<feature type="domain" description="KH" evidence="1">
    <location>
        <begin position="554"/>
        <end position="613"/>
    </location>
</feature>
<feature type="domain" description="S1 motif" evidence="1">
    <location>
        <begin position="623"/>
        <end position="691"/>
    </location>
</feature>
<feature type="binding site" evidence="1">
    <location>
        <position position="487"/>
    </location>
    <ligand>
        <name>Mg(2+)</name>
        <dbReference type="ChEBI" id="CHEBI:18420"/>
    </ligand>
</feature>
<feature type="binding site" evidence="1">
    <location>
        <position position="493"/>
    </location>
    <ligand>
        <name>Mg(2+)</name>
        <dbReference type="ChEBI" id="CHEBI:18420"/>
    </ligand>
</feature>
<evidence type="ECO:0000255" key="1">
    <source>
        <dbReference type="HAMAP-Rule" id="MF_01595"/>
    </source>
</evidence>
<reference key="1">
    <citation type="journal article" date="2005" name="J. Bacteriol.">
        <title>Insights into genome plasticity and pathogenicity of the plant pathogenic Bacterium Xanthomonas campestris pv. vesicatoria revealed by the complete genome sequence.</title>
        <authorList>
            <person name="Thieme F."/>
            <person name="Koebnik R."/>
            <person name="Bekel T."/>
            <person name="Berger C."/>
            <person name="Boch J."/>
            <person name="Buettner D."/>
            <person name="Caldana C."/>
            <person name="Gaigalat L."/>
            <person name="Goesmann A."/>
            <person name="Kay S."/>
            <person name="Kirchner O."/>
            <person name="Lanz C."/>
            <person name="Linke B."/>
            <person name="McHardy A.C."/>
            <person name="Meyer F."/>
            <person name="Mittenhuber G."/>
            <person name="Nies D.H."/>
            <person name="Niesbach-Kloesgen U."/>
            <person name="Patschkowski T."/>
            <person name="Rueckert C."/>
            <person name="Rupp O."/>
            <person name="Schneiker S."/>
            <person name="Schuster S.C."/>
            <person name="Vorhoelter F.J."/>
            <person name="Weber E."/>
            <person name="Puehler A."/>
            <person name="Bonas U."/>
            <person name="Bartels D."/>
            <person name="Kaiser O."/>
        </authorList>
    </citation>
    <scope>NUCLEOTIDE SEQUENCE [LARGE SCALE GENOMIC DNA]</scope>
    <source>
        <strain>85-10</strain>
    </source>
</reference>
<gene>
    <name evidence="1" type="primary">pnp</name>
    <name type="ordered locus">XCV2833</name>
</gene>
<name>PNP_XANE5</name>
<organism>
    <name type="scientific">Xanthomonas euvesicatoria pv. vesicatoria (strain 85-10)</name>
    <name type="common">Xanthomonas campestris pv. vesicatoria</name>
    <dbReference type="NCBI Taxonomy" id="316273"/>
    <lineage>
        <taxon>Bacteria</taxon>
        <taxon>Pseudomonadati</taxon>
        <taxon>Pseudomonadota</taxon>
        <taxon>Gammaproteobacteria</taxon>
        <taxon>Lysobacterales</taxon>
        <taxon>Lysobacteraceae</taxon>
        <taxon>Xanthomonas</taxon>
    </lineage>
</organism>
<keyword id="KW-0963">Cytoplasm</keyword>
<keyword id="KW-0460">Magnesium</keyword>
<keyword id="KW-0479">Metal-binding</keyword>
<keyword id="KW-0548">Nucleotidyltransferase</keyword>
<keyword id="KW-0694">RNA-binding</keyword>
<keyword id="KW-0808">Transferase</keyword>
<protein>
    <recommendedName>
        <fullName evidence="1">Polyribonucleotide nucleotidyltransferase</fullName>
        <ecNumber evidence="1">2.7.7.8</ecNumber>
    </recommendedName>
    <alternativeName>
        <fullName evidence="1">Polynucleotide phosphorylase</fullName>
        <shortName evidence="1">PNPase</shortName>
    </alternativeName>
</protein>
<sequence length="704" mass="75510">MAKITKTFQYGKHTVTLETGEIARQAGGAVIVKFDDTVLLVTAVAAKSAREGQDFFPLTVDYQEKFYAGGRIPGGFFKREGRATEKETLISRLIDRPIRPLFPEDYKNEVQIIATVMSMNPDIDGDIAALIGASAALSLAGTPFKGPIGAAKVGYKNGEYILNPTVTELKDSQLELVVAGTANAVLMVESEAELLSEEVMLGAVTFGHREMQKVINVINELTVEAGTKPSDWVAPAKNEGMIAALKEAVGDQLASAFQVRDKLQRRDAISAIKKDVLGALAPRATIEGWAAGDLAKEFGELEYQTMRGSVLSSKVRIDGRALDTVRPISAKAGVLPRTHGSALFTRGETQAIVITTLGTARDGQVIDAVSGEYKENFLFHYNFPPYSVGECGRFGAPKRREIGHGRLAKRGVLAVMPTLEEFPYTIRVVSEITESNGSSSMASVCGSSLALMDAGVPIKAPVAGIAMGLVKEGNDFVVLSDILGDEDHLGDMDFKVAGTAEGVSALQMDIKIEGITEEIMKQALQQAKAGRLHILGEMAHALTTPRQELSDYAPRLLTIKIHPDKIREVIGKGGSTIQAITKETGTQIDIQDDGTIIIASVNAIAAQAAKSRIEQITSDVEPGRIYEGKVAKIMDFGAFVTILPGKDGLVHVSQISSERVEKVGDKLKEGDLVRVKVLEVDKQGRIRLSIKAVEEGEGVQASAE</sequence>